<gene>
    <name type="ordered locus">At2g23090</name>
    <name type="ORF">F21P24.15</name>
</gene>
<reference key="1">
    <citation type="journal article" date="1999" name="Nature">
        <title>Sequence and analysis of chromosome 2 of the plant Arabidopsis thaliana.</title>
        <authorList>
            <person name="Lin X."/>
            <person name="Kaul S."/>
            <person name="Rounsley S.D."/>
            <person name="Shea T.P."/>
            <person name="Benito M.-I."/>
            <person name="Town C.D."/>
            <person name="Fujii C.Y."/>
            <person name="Mason T.M."/>
            <person name="Bowman C.L."/>
            <person name="Barnstead M.E."/>
            <person name="Feldblyum T.V."/>
            <person name="Buell C.R."/>
            <person name="Ketchum K.A."/>
            <person name="Lee J.J."/>
            <person name="Ronning C.M."/>
            <person name="Koo H.L."/>
            <person name="Moffat K.S."/>
            <person name="Cronin L.A."/>
            <person name="Shen M."/>
            <person name="Pai G."/>
            <person name="Van Aken S."/>
            <person name="Umayam L."/>
            <person name="Tallon L.J."/>
            <person name="Gill J.E."/>
            <person name="Adams M.D."/>
            <person name="Carrera A.J."/>
            <person name="Creasy T.H."/>
            <person name="Goodman H.M."/>
            <person name="Somerville C.R."/>
            <person name="Copenhaver G.P."/>
            <person name="Preuss D."/>
            <person name="Nierman W.C."/>
            <person name="White O."/>
            <person name="Eisen J.A."/>
            <person name="Salzberg S.L."/>
            <person name="Fraser C.M."/>
            <person name="Venter J.C."/>
        </authorList>
    </citation>
    <scope>NUCLEOTIDE SEQUENCE [LARGE SCALE GENOMIC DNA]</scope>
    <source>
        <strain>cv. Columbia</strain>
    </source>
</reference>
<reference key="2">
    <citation type="journal article" date="2017" name="Plant J.">
        <title>Araport11: a complete reannotation of the Arabidopsis thaliana reference genome.</title>
        <authorList>
            <person name="Cheng C.Y."/>
            <person name="Krishnakumar V."/>
            <person name="Chan A.P."/>
            <person name="Thibaud-Nissen F."/>
            <person name="Schobel S."/>
            <person name="Town C.D."/>
        </authorList>
    </citation>
    <scope>GENOME REANNOTATION</scope>
    <source>
        <strain>cv. Columbia</strain>
    </source>
</reference>
<reference key="3">
    <citation type="journal article" date="2003" name="Science">
        <title>Empirical analysis of transcriptional activity in the Arabidopsis genome.</title>
        <authorList>
            <person name="Yamada K."/>
            <person name="Lim J."/>
            <person name="Dale J.M."/>
            <person name="Chen H."/>
            <person name="Shinn P."/>
            <person name="Palm C.J."/>
            <person name="Southwick A.M."/>
            <person name="Wu H.C."/>
            <person name="Kim C.J."/>
            <person name="Nguyen M."/>
            <person name="Pham P.K."/>
            <person name="Cheuk R.F."/>
            <person name="Karlin-Newmann G."/>
            <person name="Liu S.X."/>
            <person name="Lam B."/>
            <person name="Sakano H."/>
            <person name="Wu T."/>
            <person name="Yu G."/>
            <person name="Miranda M."/>
            <person name="Quach H.L."/>
            <person name="Tripp M."/>
            <person name="Chang C.H."/>
            <person name="Lee J.M."/>
            <person name="Toriumi M.J."/>
            <person name="Chan M.M."/>
            <person name="Tang C.C."/>
            <person name="Onodera C.S."/>
            <person name="Deng J.M."/>
            <person name="Akiyama K."/>
            <person name="Ansari Y."/>
            <person name="Arakawa T."/>
            <person name="Banh J."/>
            <person name="Banno F."/>
            <person name="Bowser L."/>
            <person name="Brooks S.Y."/>
            <person name="Carninci P."/>
            <person name="Chao Q."/>
            <person name="Choy N."/>
            <person name="Enju A."/>
            <person name="Goldsmith A.D."/>
            <person name="Gurjal M."/>
            <person name="Hansen N.F."/>
            <person name="Hayashizaki Y."/>
            <person name="Johnson-Hopson C."/>
            <person name="Hsuan V.W."/>
            <person name="Iida K."/>
            <person name="Karnes M."/>
            <person name="Khan S."/>
            <person name="Koesema E."/>
            <person name="Ishida J."/>
            <person name="Jiang P.X."/>
            <person name="Jones T."/>
            <person name="Kawai J."/>
            <person name="Kamiya A."/>
            <person name="Meyers C."/>
            <person name="Nakajima M."/>
            <person name="Narusaka M."/>
            <person name="Seki M."/>
            <person name="Sakurai T."/>
            <person name="Satou M."/>
            <person name="Tamse R."/>
            <person name="Vaysberg M."/>
            <person name="Wallender E.K."/>
            <person name="Wong C."/>
            <person name="Yamamura Y."/>
            <person name="Yuan S."/>
            <person name="Shinozaki K."/>
            <person name="Davis R.W."/>
            <person name="Theologis A."/>
            <person name="Ecker J.R."/>
        </authorList>
    </citation>
    <scope>NUCLEOTIDE SEQUENCE [LARGE SCALE MRNA]</scope>
    <source>
        <strain>cv. Columbia</strain>
    </source>
</reference>
<reference key="4">
    <citation type="submission" date="2002-03" db="EMBL/GenBank/DDBJ databases">
        <title>Full-length cDNA from Arabidopsis thaliana.</title>
        <authorList>
            <person name="Brover V.V."/>
            <person name="Troukhan M.E."/>
            <person name="Alexandrov N.A."/>
            <person name="Lu Y.-P."/>
            <person name="Flavell R.B."/>
            <person name="Feldmann K.A."/>
        </authorList>
    </citation>
    <scope>NUCLEOTIDE SEQUENCE [LARGE SCALE MRNA]</scope>
</reference>
<reference key="5">
    <citation type="submission" date="2004-12" db="PDB data bank">
        <title>NMR solution structure of the partially disordered protein At2g23090 from Arabidopsis thaliana.</title>
        <authorList>
            <consortium name="Center for eukaryotic structural genomics (CESG)"/>
        </authorList>
    </citation>
    <scope>STRUCTURE BY NMR OF 2-78</scope>
</reference>
<sequence>MGGGNAQKSAMARAKNLEKAKAAGKGSQLEANKKAMSIQCKVCMQTFICTTSEVKCREHAEAKHPKADVVACFPHLKK</sequence>
<name>Y2309_ARATH</name>
<evidence type="ECO:0000256" key="1">
    <source>
        <dbReference type="SAM" id="MobiDB-lite"/>
    </source>
</evidence>
<evidence type="ECO:0007829" key="2">
    <source>
        <dbReference type="PDB" id="1WVK"/>
    </source>
</evidence>
<feature type="chain" id="PRO_0000278822" description="Uncharacterized protein At2g23090">
    <location>
        <begin position="1"/>
        <end position="78"/>
    </location>
</feature>
<feature type="region of interest" description="Disordered" evidence="1">
    <location>
        <begin position="1"/>
        <end position="28"/>
    </location>
</feature>
<feature type="helix" evidence="2">
    <location>
        <begin position="7"/>
        <end position="9"/>
    </location>
</feature>
<feature type="turn" evidence="2">
    <location>
        <begin position="10"/>
        <end position="12"/>
    </location>
</feature>
<feature type="turn" evidence="2">
    <location>
        <begin position="14"/>
        <end position="16"/>
    </location>
</feature>
<feature type="strand" evidence="2">
    <location>
        <begin position="20"/>
        <end position="23"/>
    </location>
</feature>
<feature type="strand" evidence="2">
    <location>
        <begin position="38"/>
        <end position="40"/>
    </location>
</feature>
<feature type="turn" evidence="2">
    <location>
        <begin position="41"/>
        <end position="44"/>
    </location>
</feature>
<feature type="strand" evidence="2">
    <location>
        <begin position="45"/>
        <end position="47"/>
    </location>
</feature>
<feature type="helix" evidence="2">
    <location>
        <begin position="54"/>
        <end position="61"/>
    </location>
</feature>
<feature type="helix" evidence="2">
    <location>
        <begin position="68"/>
        <end position="70"/>
    </location>
</feature>
<feature type="helix" evidence="2">
    <location>
        <begin position="74"/>
        <end position="76"/>
    </location>
</feature>
<dbReference type="EMBL" id="AC004401">
    <property type="protein sequence ID" value="AAC17825.1"/>
    <property type="molecule type" value="Genomic_DNA"/>
</dbReference>
<dbReference type="EMBL" id="CP002685">
    <property type="protein sequence ID" value="AEC07407.1"/>
    <property type="molecule type" value="Genomic_DNA"/>
</dbReference>
<dbReference type="EMBL" id="AY052343">
    <property type="protein sequence ID" value="AAK96535.1"/>
    <property type="molecule type" value="mRNA"/>
</dbReference>
<dbReference type="EMBL" id="AY056377">
    <property type="protein sequence ID" value="AAL08233.1"/>
    <property type="molecule type" value="mRNA"/>
</dbReference>
<dbReference type="EMBL" id="AY143800">
    <property type="protein sequence ID" value="AAN28739.1"/>
    <property type="molecule type" value="mRNA"/>
</dbReference>
<dbReference type="EMBL" id="AY085311">
    <property type="protein sequence ID" value="AAM62542.1"/>
    <property type="molecule type" value="mRNA"/>
</dbReference>
<dbReference type="PIR" id="D84620">
    <property type="entry name" value="D84620"/>
</dbReference>
<dbReference type="RefSeq" id="NP_565547.1">
    <property type="nucleotide sequence ID" value="NM_127873.4"/>
</dbReference>
<dbReference type="PDB" id="1WVK">
    <property type="method" value="NMR"/>
    <property type="chains" value="A=2-78"/>
</dbReference>
<dbReference type="PDBsum" id="1WVK"/>
<dbReference type="BMRB" id="O64818"/>
<dbReference type="SMR" id="O64818"/>
<dbReference type="BioGRID" id="2192">
    <property type="interactions" value="2"/>
</dbReference>
<dbReference type="FunCoup" id="O64818">
    <property type="interactions" value="745"/>
</dbReference>
<dbReference type="IntAct" id="O64818">
    <property type="interactions" value="1"/>
</dbReference>
<dbReference type="STRING" id="3702.O64818"/>
<dbReference type="PaxDb" id="3702-AT2G23090.1"/>
<dbReference type="ProteomicsDB" id="242845"/>
<dbReference type="DNASU" id="816839"/>
<dbReference type="EnsemblPlants" id="AT2G23090.1">
    <property type="protein sequence ID" value="AT2G23090.1"/>
    <property type="gene ID" value="AT2G23090"/>
</dbReference>
<dbReference type="GeneID" id="816839"/>
<dbReference type="Gramene" id="AT2G23090.1">
    <property type="protein sequence ID" value="AT2G23090.1"/>
    <property type="gene ID" value="AT2G23090"/>
</dbReference>
<dbReference type="KEGG" id="ath:AT2G23090"/>
<dbReference type="Araport" id="AT2G23090"/>
<dbReference type="TAIR" id="AT2G23090"/>
<dbReference type="eggNOG" id="ENOG502S9MU">
    <property type="taxonomic scope" value="Eukaryota"/>
</dbReference>
<dbReference type="HOGENOM" id="CLU_181109_0_0_1"/>
<dbReference type="InParanoid" id="O64818"/>
<dbReference type="OMA" id="VICKVCY"/>
<dbReference type="OrthoDB" id="370932at2759"/>
<dbReference type="PhylomeDB" id="O64818"/>
<dbReference type="EvolutionaryTrace" id="O64818"/>
<dbReference type="PRO" id="PR:O64818"/>
<dbReference type="Proteomes" id="UP000006548">
    <property type="component" value="Chromosome 2"/>
</dbReference>
<dbReference type="ExpressionAtlas" id="O64818">
    <property type="expression patterns" value="baseline and differential"/>
</dbReference>
<dbReference type="Gene3D" id="4.10.1050.10">
    <property type="entry name" value="At2g23090-like"/>
    <property type="match status" value="1"/>
</dbReference>
<dbReference type="InterPro" id="IPR039713">
    <property type="entry name" value="At2g23090-like"/>
</dbReference>
<dbReference type="InterPro" id="IPR039438">
    <property type="entry name" value="At2g23090-like_Znf"/>
</dbReference>
<dbReference type="InterPro" id="IPR007513">
    <property type="entry name" value="SERF-like_N"/>
</dbReference>
<dbReference type="InterPro" id="IPR026939">
    <property type="entry name" value="ZNF706/At2g23090_sf"/>
</dbReference>
<dbReference type="PANTHER" id="PTHR33788:SF20">
    <property type="entry name" value="GENOME ASSEMBLY, CHROMOSOME: A03"/>
    <property type="match status" value="1"/>
</dbReference>
<dbReference type="PANTHER" id="PTHR33788">
    <property type="entry name" value="OS07G0114300 PROTEIN"/>
    <property type="match status" value="1"/>
</dbReference>
<dbReference type="Pfam" id="PF04419">
    <property type="entry name" value="SERF-like_N"/>
    <property type="match status" value="1"/>
</dbReference>
<dbReference type="Pfam" id="PF12907">
    <property type="entry name" value="zf-met2"/>
    <property type="match status" value="1"/>
</dbReference>
<dbReference type="SUPFAM" id="SSF118359">
    <property type="entry name" value="Expressed protein At2g23090/F21P24.15"/>
    <property type="match status" value="1"/>
</dbReference>
<keyword id="KW-0002">3D-structure</keyword>
<keyword id="KW-1185">Reference proteome</keyword>
<organism>
    <name type="scientific">Arabidopsis thaliana</name>
    <name type="common">Mouse-ear cress</name>
    <dbReference type="NCBI Taxonomy" id="3702"/>
    <lineage>
        <taxon>Eukaryota</taxon>
        <taxon>Viridiplantae</taxon>
        <taxon>Streptophyta</taxon>
        <taxon>Embryophyta</taxon>
        <taxon>Tracheophyta</taxon>
        <taxon>Spermatophyta</taxon>
        <taxon>Magnoliopsida</taxon>
        <taxon>eudicotyledons</taxon>
        <taxon>Gunneridae</taxon>
        <taxon>Pentapetalae</taxon>
        <taxon>rosids</taxon>
        <taxon>malvids</taxon>
        <taxon>Brassicales</taxon>
        <taxon>Brassicaceae</taxon>
        <taxon>Camelineae</taxon>
        <taxon>Arabidopsis</taxon>
    </lineage>
</organism>
<protein>
    <recommendedName>
        <fullName>Uncharacterized protein At2g23090</fullName>
    </recommendedName>
</protein>
<proteinExistence type="evidence at protein level"/>
<accession>O64818</accession>